<name>URE2_YERE8</name>
<dbReference type="EC" id="3.5.1.5" evidence="1"/>
<dbReference type="EMBL" id="AM286415">
    <property type="protein sequence ID" value="CAL11050.1"/>
    <property type="molecule type" value="Genomic_DNA"/>
</dbReference>
<dbReference type="RefSeq" id="WP_005164261.1">
    <property type="nucleotide sequence ID" value="NC_008800.1"/>
</dbReference>
<dbReference type="RefSeq" id="YP_001005286.1">
    <property type="nucleotide sequence ID" value="NC_008800.1"/>
</dbReference>
<dbReference type="SMR" id="A1JKD8"/>
<dbReference type="KEGG" id="yen:YE0952"/>
<dbReference type="PATRIC" id="fig|393305.7.peg.1053"/>
<dbReference type="eggNOG" id="COG0832">
    <property type="taxonomic scope" value="Bacteria"/>
</dbReference>
<dbReference type="HOGENOM" id="CLU_129707_2_0_6"/>
<dbReference type="OrthoDB" id="9797217at2"/>
<dbReference type="UniPathway" id="UPA00258">
    <property type="reaction ID" value="UER00370"/>
</dbReference>
<dbReference type="Proteomes" id="UP000000642">
    <property type="component" value="Chromosome"/>
</dbReference>
<dbReference type="GO" id="GO:0035550">
    <property type="term" value="C:urease complex"/>
    <property type="evidence" value="ECO:0007669"/>
    <property type="project" value="InterPro"/>
</dbReference>
<dbReference type="GO" id="GO:0009039">
    <property type="term" value="F:urease activity"/>
    <property type="evidence" value="ECO:0007669"/>
    <property type="project" value="UniProtKB-UniRule"/>
</dbReference>
<dbReference type="GO" id="GO:0043419">
    <property type="term" value="P:urea catabolic process"/>
    <property type="evidence" value="ECO:0007669"/>
    <property type="project" value="UniProtKB-UniRule"/>
</dbReference>
<dbReference type="CDD" id="cd00407">
    <property type="entry name" value="Urease_beta"/>
    <property type="match status" value="1"/>
</dbReference>
<dbReference type="Gene3D" id="2.10.150.10">
    <property type="entry name" value="Urease, beta subunit"/>
    <property type="match status" value="1"/>
</dbReference>
<dbReference type="HAMAP" id="MF_01954">
    <property type="entry name" value="Urease_beta"/>
    <property type="match status" value="1"/>
</dbReference>
<dbReference type="InterPro" id="IPR002019">
    <property type="entry name" value="Urease_beta-like"/>
</dbReference>
<dbReference type="InterPro" id="IPR036461">
    <property type="entry name" value="Urease_betasu_sf"/>
</dbReference>
<dbReference type="InterPro" id="IPR050069">
    <property type="entry name" value="Urease_subunit"/>
</dbReference>
<dbReference type="NCBIfam" id="NF009682">
    <property type="entry name" value="PRK13203.1"/>
    <property type="match status" value="1"/>
</dbReference>
<dbReference type="NCBIfam" id="TIGR00192">
    <property type="entry name" value="urease_beta"/>
    <property type="match status" value="1"/>
</dbReference>
<dbReference type="PANTHER" id="PTHR33569">
    <property type="entry name" value="UREASE"/>
    <property type="match status" value="1"/>
</dbReference>
<dbReference type="PANTHER" id="PTHR33569:SF1">
    <property type="entry name" value="UREASE"/>
    <property type="match status" value="1"/>
</dbReference>
<dbReference type="Pfam" id="PF00699">
    <property type="entry name" value="Urease_beta"/>
    <property type="match status" value="1"/>
</dbReference>
<dbReference type="SUPFAM" id="SSF51278">
    <property type="entry name" value="Urease, beta-subunit"/>
    <property type="match status" value="1"/>
</dbReference>
<accession>A1JKD8</accession>
<proteinExistence type="inferred from homology"/>
<gene>
    <name evidence="1" type="primary">ureB</name>
    <name type="ordered locus">YE0952</name>
</gene>
<feature type="chain" id="PRO_1000070783" description="Urease subunit beta">
    <location>
        <begin position="1"/>
        <end position="164"/>
    </location>
</feature>
<feature type="region of interest" description="Disordered" evidence="2">
    <location>
        <begin position="1"/>
        <end position="32"/>
    </location>
</feature>
<feature type="compositionally biased region" description="Polar residues" evidence="2">
    <location>
        <begin position="1"/>
        <end position="10"/>
    </location>
</feature>
<feature type="compositionally biased region" description="Polar residues" evidence="2">
    <location>
        <begin position="20"/>
        <end position="32"/>
    </location>
</feature>
<organism>
    <name type="scientific">Yersinia enterocolitica serotype O:8 / biotype 1B (strain NCTC 13174 / 8081)</name>
    <dbReference type="NCBI Taxonomy" id="393305"/>
    <lineage>
        <taxon>Bacteria</taxon>
        <taxon>Pseudomonadati</taxon>
        <taxon>Pseudomonadota</taxon>
        <taxon>Gammaproteobacteria</taxon>
        <taxon>Enterobacterales</taxon>
        <taxon>Yersiniaceae</taxon>
        <taxon>Yersinia</taxon>
    </lineage>
</organism>
<keyword id="KW-0963">Cytoplasm</keyword>
<keyword id="KW-0378">Hydrolase</keyword>
<protein>
    <recommendedName>
        <fullName evidence="1">Urease subunit beta</fullName>
        <ecNumber evidence="1">3.5.1.5</ecNumber>
    </recommendedName>
    <alternativeName>
        <fullName evidence="1">Urea amidohydrolase subunit beta</fullName>
    </alternativeName>
</protein>
<evidence type="ECO:0000255" key="1">
    <source>
        <dbReference type="HAMAP-Rule" id="MF_01954"/>
    </source>
</evidence>
<evidence type="ECO:0000256" key="2">
    <source>
        <dbReference type="SAM" id="MobiDB-lite"/>
    </source>
</evidence>
<sequence>MSTKTNSTKATSEKTDSLKTNRGTKSSAGYSEQNTPLGGCILADTPITFNENKPVTKVKVRNTGDRPIQVGSHFHFFEANRALEFDRAAAYGKRLNISSTTAIRFEPGDETEVPLIPFGGKQTLYGFNNLVDGWTGEGVVPNSERPDKLEAIRRAAERGFKSSK</sequence>
<comment type="catalytic activity">
    <reaction evidence="1">
        <text>urea + 2 H2O + H(+) = hydrogencarbonate + 2 NH4(+)</text>
        <dbReference type="Rhea" id="RHEA:20557"/>
        <dbReference type="ChEBI" id="CHEBI:15377"/>
        <dbReference type="ChEBI" id="CHEBI:15378"/>
        <dbReference type="ChEBI" id="CHEBI:16199"/>
        <dbReference type="ChEBI" id="CHEBI:17544"/>
        <dbReference type="ChEBI" id="CHEBI:28938"/>
        <dbReference type="EC" id="3.5.1.5"/>
    </reaction>
</comment>
<comment type="pathway">
    <text evidence="1">Nitrogen metabolism; urea degradation; CO(2) and NH(3) from urea (urease route): step 1/1.</text>
</comment>
<comment type="subunit">
    <text evidence="1">Heterotrimer of UreA (gamma), UreB (beta) and UreC (alpha) subunits. Three heterotrimers associate to form the active enzyme.</text>
</comment>
<comment type="subcellular location">
    <subcellularLocation>
        <location evidence="1">Cytoplasm</location>
    </subcellularLocation>
</comment>
<comment type="similarity">
    <text evidence="1">Belongs to the urease beta subunit family.</text>
</comment>
<reference key="1">
    <citation type="journal article" date="2006" name="PLoS Genet.">
        <title>The complete genome sequence and comparative genome analysis of the high pathogenicity Yersinia enterocolitica strain 8081.</title>
        <authorList>
            <person name="Thomson N.R."/>
            <person name="Howard S."/>
            <person name="Wren B.W."/>
            <person name="Holden M.T.G."/>
            <person name="Crossman L."/>
            <person name="Challis G.L."/>
            <person name="Churcher C."/>
            <person name="Mungall K."/>
            <person name="Brooks K."/>
            <person name="Chillingworth T."/>
            <person name="Feltwell T."/>
            <person name="Abdellah Z."/>
            <person name="Hauser H."/>
            <person name="Jagels K."/>
            <person name="Maddison M."/>
            <person name="Moule S."/>
            <person name="Sanders M."/>
            <person name="Whitehead S."/>
            <person name="Quail M.A."/>
            <person name="Dougan G."/>
            <person name="Parkhill J."/>
            <person name="Prentice M.B."/>
        </authorList>
    </citation>
    <scope>NUCLEOTIDE SEQUENCE [LARGE SCALE GENOMIC DNA]</scope>
    <source>
        <strain>NCTC 13174 / 8081</strain>
    </source>
</reference>